<sequence length="13" mass="1624">SYSMEHFRWGKPV</sequence>
<organism>
    <name type="scientific">Equus caballus</name>
    <name type="common">Horse</name>
    <dbReference type="NCBI Taxonomy" id="9796"/>
    <lineage>
        <taxon>Eukaryota</taxon>
        <taxon>Metazoa</taxon>
        <taxon>Chordata</taxon>
        <taxon>Craniata</taxon>
        <taxon>Vertebrata</taxon>
        <taxon>Euteleostomi</taxon>
        <taxon>Mammalia</taxon>
        <taxon>Eutheria</taxon>
        <taxon>Laurasiatheria</taxon>
        <taxon>Perissodactyla</taxon>
        <taxon>Equidae</taxon>
        <taxon>Equus</taxon>
    </lineage>
</organism>
<evidence type="ECO:0000250" key="1">
    <source>
        <dbReference type="UniProtKB" id="P61281"/>
    </source>
</evidence>
<evidence type="ECO:0000269" key="2">
    <source ref="1"/>
</evidence>
<evidence type="ECO:0000305" key="3"/>
<reference key="1">
    <citation type="journal article" date="1960" name="J. Am. Chem. Soc.">
        <title>The isolation and structure of alpha-melanocyte-stimulating hormone from horse pituitaries.</title>
        <authorList>
            <person name="Dixon J.S."/>
            <person name="Li C.H."/>
        </authorList>
    </citation>
    <scope>PROTEIN SEQUENCE</scope>
    <scope>AMIDATION AT VAL-13</scope>
    <source>
        <tissue>Pituitary</tissue>
    </source>
</reference>
<keyword id="KW-0007">Acetylation</keyword>
<keyword id="KW-0027">Amidation</keyword>
<keyword id="KW-0903">Direct protein sequencing</keyword>
<keyword id="KW-0372">Hormone</keyword>
<keyword id="KW-1185">Reference proteome</keyword>
<keyword id="KW-0964">Secreted</keyword>
<dbReference type="PIR" id="A91785">
    <property type="entry name" value="MTHOAD"/>
</dbReference>
<dbReference type="InParanoid" id="P61280"/>
<dbReference type="Proteomes" id="UP000002281">
    <property type="component" value="Unplaced"/>
</dbReference>
<dbReference type="GO" id="GO:0005576">
    <property type="term" value="C:extracellular region"/>
    <property type="evidence" value="ECO:0007669"/>
    <property type="project" value="UniProtKB-SubCell"/>
</dbReference>
<dbReference type="GO" id="GO:0005179">
    <property type="term" value="F:hormone activity"/>
    <property type="evidence" value="ECO:0007669"/>
    <property type="project" value="UniProtKB-KW"/>
</dbReference>
<dbReference type="InterPro" id="IPR013531">
    <property type="entry name" value="Mcrtin_ACTH_cent"/>
</dbReference>
<dbReference type="Pfam" id="PF00976">
    <property type="entry name" value="ACTH_domain"/>
    <property type="match status" value="1"/>
</dbReference>
<comment type="subcellular location">
    <subcellularLocation>
        <location>Secreted</location>
    </subcellularLocation>
</comment>
<comment type="similarity">
    <text evidence="3">Belongs to the POMC family.</text>
</comment>
<protein>
    <recommendedName>
        <fullName>Melanotropin alpha</fullName>
    </recommendedName>
    <alternativeName>
        <fullName>Alpha-MSH</fullName>
    </alternativeName>
</protein>
<feature type="peptide" id="PRO_0000044293" description="Melanotropin alpha">
    <location>
        <begin position="1"/>
        <end position="13"/>
    </location>
</feature>
<feature type="modified residue" description="N-acetylserine" evidence="1">
    <location>
        <position position="1"/>
    </location>
</feature>
<feature type="modified residue" description="Valine amide" evidence="2">
    <location>
        <position position="13"/>
    </location>
</feature>
<proteinExistence type="evidence at protein level"/>
<name>MLA_HORSE</name>
<accession>P61280</accession>
<accession>P01198</accession>